<reference key="1">
    <citation type="journal article" date="2008" name="Proc. Natl. Acad. Sci. U.S.A.">
        <title>Niche adaptation and genome expansion in the chlorophyll d-producing cyanobacterium Acaryochloris marina.</title>
        <authorList>
            <person name="Swingley W.D."/>
            <person name="Chen M."/>
            <person name="Cheung P.C."/>
            <person name="Conrad A.L."/>
            <person name="Dejesa L.C."/>
            <person name="Hao J."/>
            <person name="Honchak B.M."/>
            <person name="Karbach L.E."/>
            <person name="Kurdoglu A."/>
            <person name="Lahiri S."/>
            <person name="Mastrian S.D."/>
            <person name="Miyashita H."/>
            <person name="Page L."/>
            <person name="Ramakrishna P."/>
            <person name="Satoh S."/>
            <person name="Sattley W.M."/>
            <person name="Shimada Y."/>
            <person name="Taylor H.L."/>
            <person name="Tomo T."/>
            <person name="Tsuchiya T."/>
            <person name="Wang Z.T."/>
            <person name="Raymond J."/>
            <person name="Mimuro M."/>
            <person name="Blankenship R.E."/>
            <person name="Touchman J.W."/>
        </authorList>
    </citation>
    <scope>NUCLEOTIDE SEQUENCE [LARGE SCALE GENOMIC DNA]</scope>
    <source>
        <strain>MBIC 11017</strain>
    </source>
</reference>
<protein>
    <recommendedName>
        <fullName evidence="1">Cytochrome b6-f complex subunit 5</fullName>
    </recommendedName>
    <alternativeName>
        <fullName evidence="1">Cytochrome b6-f complex subunit PetG</fullName>
    </alternativeName>
    <alternativeName>
        <fullName evidence="1">Cytochrome b6-f complex subunit V</fullName>
    </alternativeName>
</protein>
<organism>
    <name type="scientific">Acaryochloris marina (strain MBIC 11017)</name>
    <dbReference type="NCBI Taxonomy" id="329726"/>
    <lineage>
        <taxon>Bacteria</taxon>
        <taxon>Bacillati</taxon>
        <taxon>Cyanobacteriota</taxon>
        <taxon>Cyanophyceae</taxon>
        <taxon>Acaryochloridales</taxon>
        <taxon>Acaryochloridaceae</taxon>
        <taxon>Acaryochloris</taxon>
    </lineage>
</organism>
<feature type="chain" id="PRO_1000080602" description="Cytochrome b6-f complex subunit 5">
    <location>
        <begin position="1"/>
        <end position="36"/>
    </location>
</feature>
<feature type="transmembrane region" description="Helical" evidence="1">
    <location>
        <begin position="5"/>
        <end position="25"/>
    </location>
</feature>
<dbReference type="EMBL" id="CP000828">
    <property type="protein sequence ID" value="ABW27067.1"/>
    <property type="molecule type" value="Genomic_DNA"/>
</dbReference>
<dbReference type="RefSeq" id="WP_010474545.1">
    <property type="nucleotide sequence ID" value="NC_009925.1"/>
</dbReference>
<dbReference type="SMR" id="B0BYQ1"/>
<dbReference type="STRING" id="329726.AM1_2052"/>
<dbReference type="KEGG" id="amr:AM1_2052"/>
<dbReference type="eggNOG" id="ENOG5033BE9">
    <property type="taxonomic scope" value="Bacteria"/>
</dbReference>
<dbReference type="HOGENOM" id="CLU_216962_0_0_3"/>
<dbReference type="OrthoDB" id="428448at2"/>
<dbReference type="Proteomes" id="UP000000268">
    <property type="component" value="Chromosome"/>
</dbReference>
<dbReference type="GO" id="GO:0009512">
    <property type="term" value="C:cytochrome b6f complex"/>
    <property type="evidence" value="ECO:0007669"/>
    <property type="project" value="InterPro"/>
</dbReference>
<dbReference type="GO" id="GO:0031676">
    <property type="term" value="C:plasma membrane-derived thylakoid membrane"/>
    <property type="evidence" value="ECO:0007669"/>
    <property type="project" value="UniProtKB-SubCell"/>
</dbReference>
<dbReference type="GO" id="GO:0045158">
    <property type="term" value="F:electron transporter, transferring electrons within cytochrome b6/f complex of photosystem II activity"/>
    <property type="evidence" value="ECO:0007669"/>
    <property type="project" value="UniProtKB-UniRule"/>
</dbReference>
<dbReference type="GO" id="GO:0017004">
    <property type="term" value="P:cytochrome complex assembly"/>
    <property type="evidence" value="ECO:0007669"/>
    <property type="project" value="UniProtKB-UniRule"/>
</dbReference>
<dbReference type="GO" id="GO:0015979">
    <property type="term" value="P:photosynthesis"/>
    <property type="evidence" value="ECO:0007669"/>
    <property type="project" value="UniProtKB-KW"/>
</dbReference>
<dbReference type="HAMAP" id="MF_00432">
    <property type="entry name" value="Cytb6_f_PetG"/>
    <property type="match status" value="1"/>
</dbReference>
<dbReference type="InterPro" id="IPR003683">
    <property type="entry name" value="Cyt_6/f_cplx_su5"/>
</dbReference>
<dbReference type="InterPro" id="IPR036099">
    <property type="entry name" value="Cyt_6/f_cplx_su5_sf"/>
</dbReference>
<dbReference type="NCBIfam" id="NF001907">
    <property type="entry name" value="PRK00665.1"/>
    <property type="match status" value="1"/>
</dbReference>
<dbReference type="Pfam" id="PF02529">
    <property type="entry name" value="PetG"/>
    <property type="match status" value="1"/>
</dbReference>
<dbReference type="PIRSF" id="PIRSF000034">
    <property type="entry name" value="Cyt_b6-f_V"/>
    <property type="match status" value="1"/>
</dbReference>
<dbReference type="SUPFAM" id="SSF103446">
    <property type="entry name" value="PetG subunit of the cytochrome b6f complex"/>
    <property type="match status" value="1"/>
</dbReference>
<accession>B0BYQ1</accession>
<sequence length="36" mass="3826">MVEPLLAGIVLGLVPVTLAGLFVAAWQQYKRGEEVG</sequence>
<comment type="function">
    <text evidence="1">Component of the cytochrome b6-f complex, which mediates electron transfer between photosystem II (PSII) and photosystem I (PSI), cyclic electron flow around PSI, and state transitions. PetG is required for either the stability or assembly of the cytochrome b6-f complex.</text>
</comment>
<comment type="subunit">
    <text evidence="1">The 4 large subunits of the cytochrome b6-f complex are cytochrome b6, subunit IV (17 kDa polypeptide, PetD), cytochrome f and the Rieske protein, while the 4 small subunits are PetG, PetL, PetM and PetN. The complex functions as a dimer.</text>
</comment>
<comment type="subcellular location">
    <subcellularLocation>
        <location evidence="1">Cellular thylakoid membrane</location>
        <topology evidence="1">Single-pass membrane protein</topology>
    </subcellularLocation>
</comment>
<comment type="similarity">
    <text evidence="1">Belongs to the PetG family.</text>
</comment>
<name>PETG_ACAM1</name>
<proteinExistence type="inferred from homology"/>
<keyword id="KW-0249">Electron transport</keyword>
<keyword id="KW-0472">Membrane</keyword>
<keyword id="KW-0602">Photosynthesis</keyword>
<keyword id="KW-1185">Reference proteome</keyword>
<keyword id="KW-0793">Thylakoid</keyword>
<keyword id="KW-0812">Transmembrane</keyword>
<keyword id="KW-1133">Transmembrane helix</keyword>
<keyword id="KW-0813">Transport</keyword>
<evidence type="ECO:0000255" key="1">
    <source>
        <dbReference type="HAMAP-Rule" id="MF_00432"/>
    </source>
</evidence>
<gene>
    <name evidence="1" type="primary">petG</name>
    <name type="ordered locus">AM1_2052</name>
</gene>